<reference key="1">
    <citation type="submission" date="2007-12" db="EMBL/GenBank/DDBJ databases">
        <title>Complete sequence of Methylobacterium extorquens PA1.</title>
        <authorList>
            <consortium name="US DOE Joint Genome Institute"/>
            <person name="Copeland A."/>
            <person name="Lucas S."/>
            <person name="Lapidus A."/>
            <person name="Barry K."/>
            <person name="Glavina del Rio T."/>
            <person name="Dalin E."/>
            <person name="Tice H."/>
            <person name="Pitluck S."/>
            <person name="Saunders E."/>
            <person name="Brettin T."/>
            <person name="Bruce D."/>
            <person name="Detter J.C."/>
            <person name="Han C."/>
            <person name="Schmutz J."/>
            <person name="Larimer F."/>
            <person name="Land M."/>
            <person name="Hauser L."/>
            <person name="Kyrpides N."/>
            <person name="Kim E."/>
            <person name="Marx C."/>
            <person name="Richardson P."/>
        </authorList>
    </citation>
    <scope>NUCLEOTIDE SEQUENCE [LARGE SCALE GENOMIC DNA]</scope>
    <source>
        <strain>PA1</strain>
    </source>
</reference>
<protein>
    <recommendedName>
        <fullName evidence="1">Lipoprotein signal peptidase</fullName>
        <ecNumber evidence="1">3.4.23.36</ecNumber>
    </recommendedName>
    <alternativeName>
        <fullName evidence="1">Prolipoprotein signal peptidase</fullName>
    </alternativeName>
    <alternativeName>
        <fullName evidence="1">Signal peptidase II</fullName>
        <shortName evidence="1">SPase II</shortName>
    </alternativeName>
</protein>
<proteinExistence type="inferred from homology"/>
<evidence type="ECO:0000255" key="1">
    <source>
        <dbReference type="HAMAP-Rule" id="MF_00161"/>
    </source>
</evidence>
<organism>
    <name type="scientific">Methylorubrum extorquens (strain PA1)</name>
    <name type="common">Methylobacterium extorquens</name>
    <dbReference type="NCBI Taxonomy" id="419610"/>
    <lineage>
        <taxon>Bacteria</taxon>
        <taxon>Pseudomonadati</taxon>
        <taxon>Pseudomonadota</taxon>
        <taxon>Alphaproteobacteria</taxon>
        <taxon>Hyphomicrobiales</taxon>
        <taxon>Methylobacteriaceae</taxon>
        <taxon>Methylorubrum</taxon>
    </lineage>
</organism>
<comment type="function">
    <text evidence="1">This protein specifically catalyzes the removal of signal peptides from prolipoproteins.</text>
</comment>
<comment type="catalytic activity">
    <reaction evidence="1">
        <text>Release of signal peptides from bacterial membrane prolipoproteins. Hydrolyzes -Xaa-Yaa-Zaa-|-(S,diacylglyceryl)Cys-, in which Xaa is hydrophobic (preferably Leu), and Yaa (Ala or Ser) and Zaa (Gly or Ala) have small, neutral side chains.</text>
        <dbReference type="EC" id="3.4.23.36"/>
    </reaction>
</comment>
<comment type="pathway">
    <text evidence="1">Protein modification; lipoprotein biosynthesis (signal peptide cleavage).</text>
</comment>
<comment type="subcellular location">
    <subcellularLocation>
        <location evidence="1">Cell inner membrane</location>
        <topology evidence="1">Multi-pass membrane protein</topology>
    </subcellularLocation>
</comment>
<comment type="similarity">
    <text evidence="1">Belongs to the peptidase A8 family.</text>
</comment>
<gene>
    <name evidence="1" type="primary">lspA</name>
    <name type="ordered locus">Mext_2326</name>
</gene>
<keyword id="KW-0064">Aspartyl protease</keyword>
<keyword id="KW-0997">Cell inner membrane</keyword>
<keyword id="KW-1003">Cell membrane</keyword>
<keyword id="KW-0378">Hydrolase</keyword>
<keyword id="KW-0472">Membrane</keyword>
<keyword id="KW-0645">Protease</keyword>
<keyword id="KW-0812">Transmembrane</keyword>
<keyword id="KW-1133">Transmembrane helix</keyword>
<name>LSPA_METEP</name>
<feature type="chain" id="PRO_1000097263" description="Lipoprotein signal peptidase">
    <location>
        <begin position="1"/>
        <end position="171"/>
    </location>
</feature>
<feature type="transmembrane region" description="Helical" evidence="1">
    <location>
        <begin position="7"/>
        <end position="27"/>
    </location>
</feature>
<feature type="transmembrane region" description="Helical" evidence="1">
    <location>
        <begin position="64"/>
        <end position="84"/>
    </location>
</feature>
<feature type="transmembrane region" description="Helical" evidence="1">
    <location>
        <begin position="88"/>
        <end position="108"/>
    </location>
</feature>
<feature type="transmembrane region" description="Helical" evidence="1">
    <location>
        <begin position="128"/>
        <end position="148"/>
    </location>
</feature>
<feature type="active site" evidence="1">
    <location>
        <position position="118"/>
    </location>
</feature>
<feature type="active site" evidence="1">
    <location>
        <position position="136"/>
    </location>
</feature>
<sequence>MTAFRSGLIALLATLALDQASKLWLYFGTDLVMTQPWRLAPFADFVVVWNRGVSYGLFQQEGGLGRWLLVAVSLAAVIGLSVWMRRAGSRLLAVALGLIVGGALGNAIDRAAYGAVFDFVHLHAGPWSWYVFNVADAAIVAGVVGLILDSLRPAPRAPSTDVAGNGGHPQA</sequence>
<accession>A9W565</accession>
<dbReference type="EC" id="3.4.23.36" evidence="1"/>
<dbReference type="EMBL" id="CP000908">
    <property type="protein sequence ID" value="ABY30721.1"/>
    <property type="molecule type" value="Genomic_DNA"/>
</dbReference>
<dbReference type="RefSeq" id="WP_012253765.1">
    <property type="nucleotide sequence ID" value="NC_010172.1"/>
</dbReference>
<dbReference type="SMR" id="A9W565"/>
<dbReference type="KEGG" id="mex:Mext_2326"/>
<dbReference type="eggNOG" id="COG0597">
    <property type="taxonomic scope" value="Bacteria"/>
</dbReference>
<dbReference type="HOGENOM" id="CLU_083252_4_3_5"/>
<dbReference type="BioCyc" id="MEXT419610:MEXT_RS11720-MONOMER"/>
<dbReference type="UniPathway" id="UPA00665"/>
<dbReference type="GO" id="GO:0005886">
    <property type="term" value="C:plasma membrane"/>
    <property type="evidence" value="ECO:0007669"/>
    <property type="project" value="UniProtKB-SubCell"/>
</dbReference>
<dbReference type="GO" id="GO:0004190">
    <property type="term" value="F:aspartic-type endopeptidase activity"/>
    <property type="evidence" value="ECO:0007669"/>
    <property type="project" value="UniProtKB-UniRule"/>
</dbReference>
<dbReference type="GO" id="GO:0006508">
    <property type="term" value="P:proteolysis"/>
    <property type="evidence" value="ECO:0007669"/>
    <property type="project" value="UniProtKB-KW"/>
</dbReference>
<dbReference type="HAMAP" id="MF_00161">
    <property type="entry name" value="LspA"/>
    <property type="match status" value="1"/>
</dbReference>
<dbReference type="InterPro" id="IPR001872">
    <property type="entry name" value="Peptidase_A8"/>
</dbReference>
<dbReference type="NCBIfam" id="TIGR00077">
    <property type="entry name" value="lspA"/>
    <property type="match status" value="1"/>
</dbReference>
<dbReference type="PANTHER" id="PTHR33695">
    <property type="entry name" value="LIPOPROTEIN SIGNAL PEPTIDASE"/>
    <property type="match status" value="1"/>
</dbReference>
<dbReference type="PANTHER" id="PTHR33695:SF1">
    <property type="entry name" value="LIPOPROTEIN SIGNAL PEPTIDASE"/>
    <property type="match status" value="1"/>
</dbReference>
<dbReference type="Pfam" id="PF01252">
    <property type="entry name" value="Peptidase_A8"/>
    <property type="match status" value="1"/>
</dbReference>
<dbReference type="PRINTS" id="PR00781">
    <property type="entry name" value="LIPOSIGPTASE"/>
</dbReference>
<dbReference type="PROSITE" id="PS00855">
    <property type="entry name" value="SPASE_II"/>
    <property type="match status" value="1"/>
</dbReference>